<keyword id="KW-0520">NAD</keyword>
<keyword id="KW-0560">Oxidoreductase</keyword>
<accession>B5Z1X8</accession>
<protein>
    <recommendedName>
        <fullName evidence="1">Altronate oxidoreductase</fullName>
        <ecNumber evidence="1">1.1.1.58</ecNumber>
    </recommendedName>
    <alternativeName>
        <fullName evidence="1">Tagaturonate dehydrogenase</fullName>
    </alternativeName>
    <alternativeName>
        <fullName evidence="1">Tagaturonate reductase</fullName>
    </alternativeName>
</protein>
<reference key="1">
    <citation type="journal article" date="2011" name="Proc. Natl. Acad. Sci. U.S.A.">
        <title>Genomic anatomy of Escherichia coli O157:H7 outbreaks.</title>
        <authorList>
            <person name="Eppinger M."/>
            <person name="Mammel M.K."/>
            <person name="Leclerc J.E."/>
            <person name="Ravel J."/>
            <person name="Cebula T.A."/>
        </authorList>
    </citation>
    <scope>NUCLEOTIDE SEQUENCE [LARGE SCALE GENOMIC DNA]</scope>
    <source>
        <strain>EC4115 / EHEC</strain>
    </source>
</reference>
<feature type="chain" id="PRO_1000131507" description="Altronate oxidoreductase">
    <location>
        <begin position="1"/>
        <end position="483"/>
    </location>
</feature>
<feature type="binding site" evidence="1">
    <location>
        <begin position="18"/>
        <end position="29"/>
    </location>
    <ligand>
        <name>NAD(+)</name>
        <dbReference type="ChEBI" id="CHEBI:57540"/>
    </ligand>
</feature>
<proteinExistence type="inferred from homology"/>
<sequence length="483" mass="54808">MKTLNRRDFPGAQYPERIIQFGEGNFLRAFVDWQIDLLNEHTDLNSGVVVVRPIETSFPPSLSTQDGLYTTIIRGLNEKGEAVSDARLIRSVNREISVYSEYDEFLKLAHNPEMRFVFSNTTEAGISYHAGDKFDDAPAVSYPAKLTRLLFERFSHFNGALDKGWIIIPCELIDYNGDALRELVLRYAQEWALPEAFIQWLDQANSFCSTLVDRIVTGYPRDEVAKLEEELGYHDGFLDTAEHFYLFVIQGPKSLATELRLDKYPLNVLIVDDIKPYKERKVAILNGAHTALVPVAFQAGLDTVGEAMNDAEICAFVEKAIYEEIIPVLDLPRDELESFASAVTGRFRNPYIKHQLLSIALNGMTKFRTRILPQLLAGQKANGTLPARLTFALAALIAFYRGERNGETYPVQDDAHWLERYQQLWSQHRDRVIGTQELVAIVLAEKDHWEQDLTQVPGLVEQVANDLDAILEKGMREAVRPLC</sequence>
<name>UXAB_ECO5E</name>
<comment type="catalytic activity">
    <reaction evidence="1">
        <text>D-altronate + NAD(+) = keto-D-tagaturonate + NADH + H(+)</text>
        <dbReference type="Rhea" id="RHEA:17813"/>
        <dbReference type="ChEBI" id="CHEBI:15378"/>
        <dbReference type="ChEBI" id="CHEBI:17360"/>
        <dbReference type="ChEBI" id="CHEBI:17886"/>
        <dbReference type="ChEBI" id="CHEBI:57540"/>
        <dbReference type="ChEBI" id="CHEBI:57945"/>
        <dbReference type="EC" id="1.1.1.58"/>
    </reaction>
</comment>
<comment type="pathway">
    <text evidence="1">Carbohydrate metabolism; pentose and glucuronate interconversion.</text>
</comment>
<comment type="similarity">
    <text evidence="1">Belongs to the mannitol dehydrogenase family. UxaB subfamily.</text>
</comment>
<gene>
    <name evidence="1" type="primary">uxaB</name>
    <name type="ordered locus">ECH74115_2134</name>
</gene>
<dbReference type="EC" id="1.1.1.58" evidence="1"/>
<dbReference type="EMBL" id="CP001164">
    <property type="protein sequence ID" value="ACI35444.1"/>
    <property type="molecule type" value="Genomic_DNA"/>
</dbReference>
<dbReference type="RefSeq" id="WP_000854633.1">
    <property type="nucleotide sequence ID" value="NC_011353.1"/>
</dbReference>
<dbReference type="SMR" id="B5Z1X8"/>
<dbReference type="KEGG" id="ecf:ECH74115_2134"/>
<dbReference type="HOGENOM" id="CLU_027324_1_0_6"/>
<dbReference type="UniPathway" id="UPA00246"/>
<dbReference type="GO" id="GO:0005829">
    <property type="term" value="C:cytosol"/>
    <property type="evidence" value="ECO:0007669"/>
    <property type="project" value="TreeGrafter"/>
</dbReference>
<dbReference type="GO" id="GO:0008926">
    <property type="term" value="F:mannitol-1-phosphate 5-dehydrogenase activity"/>
    <property type="evidence" value="ECO:0007669"/>
    <property type="project" value="TreeGrafter"/>
</dbReference>
<dbReference type="GO" id="GO:0009026">
    <property type="term" value="F:tagaturonate reductase activity"/>
    <property type="evidence" value="ECO:0007669"/>
    <property type="project" value="UniProtKB-UniRule"/>
</dbReference>
<dbReference type="GO" id="GO:0019698">
    <property type="term" value="P:D-galacturonate catabolic process"/>
    <property type="evidence" value="ECO:0007669"/>
    <property type="project" value="TreeGrafter"/>
</dbReference>
<dbReference type="GO" id="GO:0019592">
    <property type="term" value="P:mannitol catabolic process"/>
    <property type="evidence" value="ECO:0007669"/>
    <property type="project" value="TreeGrafter"/>
</dbReference>
<dbReference type="FunFam" id="1.10.1040.10:FF:000018">
    <property type="entry name" value="Altronate oxidoreductase"/>
    <property type="match status" value="1"/>
</dbReference>
<dbReference type="FunFam" id="3.40.50.720:FF:000153">
    <property type="entry name" value="Altronate oxidoreductase"/>
    <property type="match status" value="1"/>
</dbReference>
<dbReference type="Gene3D" id="1.10.1040.10">
    <property type="entry name" value="N-(1-d-carboxylethyl)-l-norvaline Dehydrogenase, domain 2"/>
    <property type="match status" value="1"/>
</dbReference>
<dbReference type="Gene3D" id="3.40.50.720">
    <property type="entry name" value="NAD(P)-binding Rossmann-like Domain"/>
    <property type="match status" value="1"/>
</dbReference>
<dbReference type="HAMAP" id="MF_00670">
    <property type="entry name" value="Altron_oxidoreduct"/>
    <property type="match status" value="1"/>
</dbReference>
<dbReference type="InterPro" id="IPR008927">
    <property type="entry name" value="6-PGluconate_DH-like_C_sf"/>
</dbReference>
<dbReference type="InterPro" id="IPR013328">
    <property type="entry name" value="6PGD_dom2"/>
</dbReference>
<dbReference type="InterPro" id="IPR023668">
    <property type="entry name" value="Altronate_OxRdtase"/>
</dbReference>
<dbReference type="InterPro" id="IPR013118">
    <property type="entry name" value="Mannitol_DH_C"/>
</dbReference>
<dbReference type="InterPro" id="IPR013131">
    <property type="entry name" value="Mannitol_DH_N"/>
</dbReference>
<dbReference type="InterPro" id="IPR036291">
    <property type="entry name" value="NAD(P)-bd_dom_sf"/>
</dbReference>
<dbReference type="NCBIfam" id="NF002969">
    <property type="entry name" value="PRK03643.1"/>
    <property type="match status" value="1"/>
</dbReference>
<dbReference type="PANTHER" id="PTHR30524:SF0">
    <property type="entry name" value="ALTRONATE OXIDOREDUCTASE-RELATED"/>
    <property type="match status" value="1"/>
</dbReference>
<dbReference type="PANTHER" id="PTHR30524">
    <property type="entry name" value="MANNITOL-1-PHOSPHATE 5-DEHYDROGENASE"/>
    <property type="match status" value="1"/>
</dbReference>
<dbReference type="Pfam" id="PF01232">
    <property type="entry name" value="Mannitol_dh"/>
    <property type="match status" value="1"/>
</dbReference>
<dbReference type="Pfam" id="PF08125">
    <property type="entry name" value="Mannitol_dh_C"/>
    <property type="match status" value="1"/>
</dbReference>
<dbReference type="SUPFAM" id="SSF48179">
    <property type="entry name" value="6-phosphogluconate dehydrogenase C-terminal domain-like"/>
    <property type="match status" value="1"/>
</dbReference>
<dbReference type="SUPFAM" id="SSF51735">
    <property type="entry name" value="NAD(P)-binding Rossmann-fold domains"/>
    <property type="match status" value="1"/>
</dbReference>
<organism>
    <name type="scientific">Escherichia coli O157:H7 (strain EC4115 / EHEC)</name>
    <dbReference type="NCBI Taxonomy" id="444450"/>
    <lineage>
        <taxon>Bacteria</taxon>
        <taxon>Pseudomonadati</taxon>
        <taxon>Pseudomonadota</taxon>
        <taxon>Gammaproteobacteria</taxon>
        <taxon>Enterobacterales</taxon>
        <taxon>Enterobacteriaceae</taxon>
        <taxon>Escherichia</taxon>
    </lineage>
</organism>
<evidence type="ECO:0000255" key="1">
    <source>
        <dbReference type="HAMAP-Rule" id="MF_00670"/>
    </source>
</evidence>